<dbReference type="EMBL" id="AE014075">
    <property type="protein sequence ID" value="AAN83098.1"/>
    <property type="molecule type" value="Genomic_DNA"/>
</dbReference>
<dbReference type="RefSeq" id="WP_000135618.1">
    <property type="nucleotide sequence ID" value="NZ_CP051263.1"/>
</dbReference>
<dbReference type="SMR" id="Q8FBS8"/>
<dbReference type="STRING" id="199310.c4666"/>
<dbReference type="GeneID" id="86948620"/>
<dbReference type="KEGG" id="ecc:c4666"/>
<dbReference type="eggNOG" id="COG0356">
    <property type="taxonomic scope" value="Bacteria"/>
</dbReference>
<dbReference type="HOGENOM" id="CLU_041018_1_0_6"/>
<dbReference type="BioCyc" id="ECOL199310:C4666-MONOMER"/>
<dbReference type="Proteomes" id="UP000001410">
    <property type="component" value="Chromosome"/>
</dbReference>
<dbReference type="GO" id="GO:0005886">
    <property type="term" value="C:plasma membrane"/>
    <property type="evidence" value="ECO:0007669"/>
    <property type="project" value="UniProtKB-SubCell"/>
</dbReference>
<dbReference type="GO" id="GO:0045259">
    <property type="term" value="C:proton-transporting ATP synthase complex"/>
    <property type="evidence" value="ECO:0007669"/>
    <property type="project" value="UniProtKB-KW"/>
</dbReference>
<dbReference type="GO" id="GO:0046933">
    <property type="term" value="F:proton-transporting ATP synthase activity, rotational mechanism"/>
    <property type="evidence" value="ECO:0007669"/>
    <property type="project" value="UniProtKB-UniRule"/>
</dbReference>
<dbReference type="GO" id="GO:0042777">
    <property type="term" value="P:proton motive force-driven plasma membrane ATP synthesis"/>
    <property type="evidence" value="ECO:0007669"/>
    <property type="project" value="TreeGrafter"/>
</dbReference>
<dbReference type="CDD" id="cd00310">
    <property type="entry name" value="ATP-synt_Fo_a_6"/>
    <property type="match status" value="1"/>
</dbReference>
<dbReference type="FunFam" id="1.20.120.220:FF:000002">
    <property type="entry name" value="ATP synthase subunit a"/>
    <property type="match status" value="1"/>
</dbReference>
<dbReference type="Gene3D" id="1.20.120.220">
    <property type="entry name" value="ATP synthase, F0 complex, subunit A"/>
    <property type="match status" value="1"/>
</dbReference>
<dbReference type="HAMAP" id="MF_01393">
    <property type="entry name" value="ATP_synth_a_bact"/>
    <property type="match status" value="1"/>
</dbReference>
<dbReference type="InterPro" id="IPR045082">
    <property type="entry name" value="ATP_syn_F0_a_bact/chloroplast"/>
</dbReference>
<dbReference type="InterPro" id="IPR000568">
    <property type="entry name" value="ATP_synth_F0_asu"/>
</dbReference>
<dbReference type="InterPro" id="IPR023011">
    <property type="entry name" value="ATP_synth_F0_asu_AS"/>
</dbReference>
<dbReference type="InterPro" id="IPR035908">
    <property type="entry name" value="F0_ATP_A_sf"/>
</dbReference>
<dbReference type="NCBIfam" id="TIGR01131">
    <property type="entry name" value="ATP_synt_6_or_A"/>
    <property type="match status" value="1"/>
</dbReference>
<dbReference type="NCBIfam" id="NF004477">
    <property type="entry name" value="PRK05815.1-1"/>
    <property type="match status" value="1"/>
</dbReference>
<dbReference type="PANTHER" id="PTHR42823">
    <property type="entry name" value="ATP SYNTHASE SUBUNIT A, CHLOROPLASTIC"/>
    <property type="match status" value="1"/>
</dbReference>
<dbReference type="PANTHER" id="PTHR42823:SF3">
    <property type="entry name" value="ATP SYNTHASE SUBUNIT A, CHLOROPLASTIC"/>
    <property type="match status" value="1"/>
</dbReference>
<dbReference type="Pfam" id="PF00119">
    <property type="entry name" value="ATP-synt_A"/>
    <property type="match status" value="1"/>
</dbReference>
<dbReference type="PRINTS" id="PR00123">
    <property type="entry name" value="ATPASEA"/>
</dbReference>
<dbReference type="SUPFAM" id="SSF81336">
    <property type="entry name" value="F1F0 ATP synthase subunit A"/>
    <property type="match status" value="1"/>
</dbReference>
<dbReference type="PROSITE" id="PS00449">
    <property type="entry name" value="ATPASE_A"/>
    <property type="match status" value="1"/>
</dbReference>
<keyword id="KW-0066">ATP synthesis</keyword>
<keyword id="KW-0997">Cell inner membrane</keyword>
<keyword id="KW-1003">Cell membrane</keyword>
<keyword id="KW-0138">CF(0)</keyword>
<keyword id="KW-0375">Hydrogen ion transport</keyword>
<keyword id="KW-0406">Ion transport</keyword>
<keyword id="KW-0472">Membrane</keyword>
<keyword id="KW-1185">Reference proteome</keyword>
<keyword id="KW-0812">Transmembrane</keyword>
<keyword id="KW-1133">Transmembrane helix</keyword>
<keyword id="KW-0813">Transport</keyword>
<sequence length="271" mass="30312">MASENMTPQDYIGHHLNNLQLDLRTFSLVDPHNPPATFWTINIDSMFFSVVLGLLFLVLFRSVAKKATSGVPGKFQTAIELVIGFVNGSVKDMYHGKSKLIAPLALTIFVWVFLMNLMDLLPIDLLPYIAEHVLGLPALRVVPSADVNVTLSMALGVFILILFYSIKMKGIGGFTKELTLQPFNHWAFIPVNLILEGVSLLSKPVSLGLRLFGNMYAGELIFILIAGLLPWWSQWILNVPWAIFHILIITLQAFIFMVLTIVYLSMASEEH</sequence>
<reference key="1">
    <citation type="journal article" date="2002" name="Proc. Natl. Acad. Sci. U.S.A.">
        <title>Extensive mosaic structure revealed by the complete genome sequence of uropathogenic Escherichia coli.</title>
        <authorList>
            <person name="Welch R.A."/>
            <person name="Burland V."/>
            <person name="Plunkett G. III"/>
            <person name="Redford P."/>
            <person name="Roesch P."/>
            <person name="Rasko D."/>
            <person name="Buckles E.L."/>
            <person name="Liou S.-R."/>
            <person name="Boutin A."/>
            <person name="Hackett J."/>
            <person name="Stroud D."/>
            <person name="Mayhew G.F."/>
            <person name="Rose D.J."/>
            <person name="Zhou S."/>
            <person name="Schwartz D.C."/>
            <person name="Perna N.T."/>
            <person name="Mobley H.L.T."/>
            <person name="Donnenberg M.S."/>
            <person name="Blattner F.R."/>
        </authorList>
    </citation>
    <scope>NUCLEOTIDE SEQUENCE [LARGE SCALE GENOMIC DNA]</scope>
    <source>
        <strain>CFT073 / ATCC 700928 / UPEC</strain>
    </source>
</reference>
<protein>
    <recommendedName>
        <fullName evidence="1">ATP synthase subunit a</fullName>
    </recommendedName>
    <alternativeName>
        <fullName evidence="1">ATP synthase F0 sector subunit a</fullName>
    </alternativeName>
    <alternativeName>
        <fullName evidence="1">F-ATPase subunit 6</fullName>
    </alternativeName>
</protein>
<organism>
    <name type="scientific">Escherichia coli O6:H1 (strain CFT073 / ATCC 700928 / UPEC)</name>
    <dbReference type="NCBI Taxonomy" id="199310"/>
    <lineage>
        <taxon>Bacteria</taxon>
        <taxon>Pseudomonadati</taxon>
        <taxon>Pseudomonadota</taxon>
        <taxon>Gammaproteobacteria</taxon>
        <taxon>Enterobacterales</taxon>
        <taxon>Enterobacteriaceae</taxon>
        <taxon>Escherichia</taxon>
    </lineage>
</organism>
<name>ATP6_ECOL6</name>
<feature type="chain" id="PRO_0000362305" description="ATP synthase subunit a">
    <location>
        <begin position="1"/>
        <end position="271"/>
    </location>
</feature>
<feature type="transmembrane region" description="Helical" evidence="1">
    <location>
        <begin position="40"/>
        <end position="60"/>
    </location>
</feature>
<feature type="transmembrane region" description="Helical" evidence="1">
    <location>
        <begin position="100"/>
        <end position="120"/>
    </location>
</feature>
<feature type="transmembrane region" description="Helical" evidence="1">
    <location>
        <begin position="146"/>
        <end position="166"/>
    </location>
</feature>
<feature type="transmembrane region" description="Helical" evidence="1">
    <location>
        <begin position="220"/>
        <end position="240"/>
    </location>
</feature>
<feature type="transmembrane region" description="Helical" evidence="1">
    <location>
        <begin position="242"/>
        <end position="262"/>
    </location>
</feature>
<evidence type="ECO:0000255" key="1">
    <source>
        <dbReference type="HAMAP-Rule" id="MF_01393"/>
    </source>
</evidence>
<comment type="function">
    <text evidence="1">Key component of the proton channel; it plays a direct role in the translocation of protons across the membrane.</text>
</comment>
<comment type="subunit">
    <text evidence="1">F-type ATPases have 2 components, CF(1) - the catalytic core - and CF(0) - the membrane proton channel. CF(1) has five subunits: alpha(3), beta(3), gamma(1), delta(1), epsilon(1). CF(0) has three main subunits: a(1), b(2) and c(9-12). The alpha and beta chains form an alternating ring which encloses part of the gamma chain. CF(1) is attached to CF(0) by a central stalk formed by the gamma and epsilon chains, while a peripheral stalk is formed by the delta and b chains.</text>
</comment>
<comment type="subcellular location">
    <subcellularLocation>
        <location evidence="1">Cell inner membrane</location>
        <topology evidence="1">Multi-pass membrane protein</topology>
    </subcellularLocation>
</comment>
<comment type="similarity">
    <text evidence="1">Belongs to the ATPase A chain family.</text>
</comment>
<gene>
    <name evidence="1" type="primary">atpB</name>
    <name type="ordered locus">c4666</name>
</gene>
<proteinExistence type="inferred from homology"/>
<accession>Q8FBS8</accession>